<comment type="function">
    <text evidence="1">Binds to the 23S rRNA.</text>
</comment>
<comment type="similarity">
    <text evidence="1">Belongs to the bacterial ribosomal protein bL9 family.</text>
</comment>
<name>RL9_RHILO</name>
<protein>
    <recommendedName>
        <fullName evidence="1">Large ribosomal subunit protein bL9</fullName>
    </recommendedName>
    <alternativeName>
        <fullName evidence="3">50S ribosomal protein L9</fullName>
    </alternativeName>
</protein>
<accession>Q984U0</accession>
<sequence length="194" mass="21205">MEVILLERVSRLGQMGDTVKVKDGFARNFLLPQGKALRANEANKKKFEGQRAQLEARNLERKSEASQVAEKLDGKSFIAVRSAGETGQLYGSVSTRDIAELLTAEGFSVNRNQILLNQPIKTIGLTNVAIALHPEVEVTVTLNIARTADEAERQAKGETLTTAEAIYGDDINDNARPENFFDPNAEFDGGEDNA</sequence>
<proteinExistence type="inferred from homology"/>
<feature type="chain" id="PRO_0000176665" description="Large ribosomal subunit protein bL9">
    <location>
        <begin position="1"/>
        <end position="194"/>
    </location>
</feature>
<feature type="region of interest" description="Disordered" evidence="2">
    <location>
        <begin position="169"/>
        <end position="194"/>
    </location>
</feature>
<evidence type="ECO:0000255" key="1">
    <source>
        <dbReference type="HAMAP-Rule" id="MF_00503"/>
    </source>
</evidence>
<evidence type="ECO:0000256" key="2">
    <source>
        <dbReference type="SAM" id="MobiDB-lite"/>
    </source>
</evidence>
<evidence type="ECO:0000305" key="3"/>
<organism>
    <name type="scientific">Mesorhizobium japonicum (strain LMG 29417 / CECT 9101 / MAFF 303099)</name>
    <name type="common">Mesorhizobium loti (strain MAFF 303099)</name>
    <dbReference type="NCBI Taxonomy" id="266835"/>
    <lineage>
        <taxon>Bacteria</taxon>
        <taxon>Pseudomonadati</taxon>
        <taxon>Pseudomonadota</taxon>
        <taxon>Alphaproteobacteria</taxon>
        <taxon>Hyphomicrobiales</taxon>
        <taxon>Phyllobacteriaceae</taxon>
        <taxon>Mesorhizobium</taxon>
    </lineage>
</organism>
<dbReference type="EMBL" id="BA000012">
    <property type="protein sequence ID" value="BAB54223.1"/>
    <property type="molecule type" value="Genomic_DNA"/>
</dbReference>
<dbReference type="RefSeq" id="WP_010915167.1">
    <property type="nucleotide sequence ID" value="NC_002678.2"/>
</dbReference>
<dbReference type="SMR" id="Q984U0"/>
<dbReference type="GeneID" id="66684953"/>
<dbReference type="KEGG" id="mlo:mll7843"/>
<dbReference type="eggNOG" id="COG0359">
    <property type="taxonomic scope" value="Bacteria"/>
</dbReference>
<dbReference type="HOGENOM" id="CLU_078938_1_0_5"/>
<dbReference type="Proteomes" id="UP000000552">
    <property type="component" value="Chromosome"/>
</dbReference>
<dbReference type="GO" id="GO:1990904">
    <property type="term" value="C:ribonucleoprotein complex"/>
    <property type="evidence" value="ECO:0007669"/>
    <property type="project" value="UniProtKB-KW"/>
</dbReference>
<dbReference type="GO" id="GO:0005840">
    <property type="term" value="C:ribosome"/>
    <property type="evidence" value="ECO:0007669"/>
    <property type="project" value="UniProtKB-KW"/>
</dbReference>
<dbReference type="GO" id="GO:0019843">
    <property type="term" value="F:rRNA binding"/>
    <property type="evidence" value="ECO:0007669"/>
    <property type="project" value="UniProtKB-UniRule"/>
</dbReference>
<dbReference type="GO" id="GO:0003735">
    <property type="term" value="F:structural constituent of ribosome"/>
    <property type="evidence" value="ECO:0007669"/>
    <property type="project" value="InterPro"/>
</dbReference>
<dbReference type="GO" id="GO:0006412">
    <property type="term" value="P:translation"/>
    <property type="evidence" value="ECO:0007669"/>
    <property type="project" value="UniProtKB-UniRule"/>
</dbReference>
<dbReference type="Gene3D" id="3.10.430.100">
    <property type="entry name" value="Ribosomal protein L9, C-terminal domain"/>
    <property type="match status" value="1"/>
</dbReference>
<dbReference type="Gene3D" id="3.40.5.10">
    <property type="entry name" value="Ribosomal protein L9, N-terminal domain"/>
    <property type="match status" value="1"/>
</dbReference>
<dbReference type="HAMAP" id="MF_00503">
    <property type="entry name" value="Ribosomal_bL9"/>
    <property type="match status" value="1"/>
</dbReference>
<dbReference type="InterPro" id="IPR000244">
    <property type="entry name" value="Ribosomal_bL9"/>
</dbReference>
<dbReference type="InterPro" id="IPR009027">
    <property type="entry name" value="Ribosomal_bL9/RNase_H1_N"/>
</dbReference>
<dbReference type="InterPro" id="IPR020594">
    <property type="entry name" value="Ribosomal_bL9_bac/chp"/>
</dbReference>
<dbReference type="InterPro" id="IPR020069">
    <property type="entry name" value="Ribosomal_bL9_C"/>
</dbReference>
<dbReference type="InterPro" id="IPR036791">
    <property type="entry name" value="Ribosomal_bL9_C_sf"/>
</dbReference>
<dbReference type="InterPro" id="IPR020070">
    <property type="entry name" value="Ribosomal_bL9_N"/>
</dbReference>
<dbReference type="InterPro" id="IPR036935">
    <property type="entry name" value="Ribosomal_bL9_N_sf"/>
</dbReference>
<dbReference type="NCBIfam" id="TIGR00158">
    <property type="entry name" value="L9"/>
    <property type="match status" value="1"/>
</dbReference>
<dbReference type="PANTHER" id="PTHR21368">
    <property type="entry name" value="50S RIBOSOMAL PROTEIN L9"/>
    <property type="match status" value="1"/>
</dbReference>
<dbReference type="Pfam" id="PF03948">
    <property type="entry name" value="Ribosomal_L9_C"/>
    <property type="match status" value="1"/>
</dbReference>
<dbReference type="Pfam" id="PF01281">
    <property type="entry name" value="Ribosomal_L9_N"/>
    <property type="match status" value="1"/>
</dbReference>
<dbReference type="SUPFAM" id="SSF55658">
    <property type="entry name" value="L9 N-domain-like"/>
    <property type="match status" value="1"/>
</dbReference>
<dbReference type="SUPFAM" id="SSF55653">
    <property type="entry name" value="Ribosomal protein L9 C-domain"/>
    <property type="match status" value="1"/>
</dbReference>
<dbReference type="PROSITE" id="PS00651">
    <property type="entry name" value="RIBOSOMAL_L9"/>
    <property type="match status" value="1"/>
</dbReference>
<keyword id="KW-0687">Ribonucleoprotein</keyword>
<keyword id="KW-0689">Ribosomal protein</keyword>
<keyword id="KW-0694">RNA-binding</keyword>
<keyword id="KW-0699">rRNA-binding</keyword>
<gene>
    <name evidence="1" type="primary">rplI</name>
    <name type="ordered locus">mll7843</name>
</gene>
<reference key="1">
    <citation type="journal article" date="2000" name="DNA Res.">
        <title>Complete genome structure of the nitrogen-fixing symbiotic bacterium Mesorhizobium loti.</title>
        <authorList>
            <person name="Kaneko T."/>
            <person name="Nakamura Y."/>
            <person name="Sato S."/>
            <person name="Asamizu E."/>
            <person name="Kato T."/>
            <person name="Sasamoto S."/>
            <person name="Watanabe A."/>
            <person name="Idesawa K."/>
            <person name="Ishikawa A."/>
            <person name="Kawashima K."/>
            <person name="Kimura T."/>
            <person name="Kishida Y."/>
            <person name="Kiyokawa C."/>
            <person name="Kohara M."/>
            <person name="Matsumoto M."/>
            <person name="Matsuno A."/>
            <person name="Mochizuki Y."/>
            <person name="Nakayama S."/>
            <person name="Nakazaki N."/>
            <person name="Shimpo S."/>
            <person name="Sugimoto M."/>
            <person name="Takeuchi C."/>
            <person name="Yamada M."/>
            <person name="Tabata S."/>
        </authorList>
    </citation>
    <scope>NUCLEOTIDE SEQUENCE [LARGE SCALE GENOMIC DNA]</scope>
    <source>
        <strain>LMG 29417 / CECT 9101 / MAFF 303099</strain>
    </source>
</reference>